<organism>
    <name type="scientific">Rhopalurus junceus</name>
    <name type="common">Caribbean blue scorpion</name>
    <dbReference type="NCBI Taxonomy" id="419285"/>
    <lineage>
        <taxon>Eukaryota</taxon>
        <taxon>Metazoa</taxon>
        <taxon>Ecdysozoa</taxon>
        <taxon>Arthropoda</taxon>
        <taxon>Chelicerata</taxon>
        <taxon>Arachnida</taxon>
        <taxon>Scorpiones</taxon>
        <taxon>Buthida</taxon>
        <taxon>Buthoidea</taxon>
        <taxon>Buthidae</taxon>
        <taxon>Rhopalurus</taxon>
    </lineage>
</organism>
<keyword id="KW-0903">Direct protein sequencing</keyword>
<keyword id="KW-1015">Disulfide bond</keyword>
<keyword id="KW-0872">Ion channel impairing toxin</keyword>
<keyword id="KW-0528">Neurotoxin</keyword>
<keyword id="KW-0964">Secreted</keyword>
<keyword id="KW-0732">Signal</keyword>
<keyword id="KW-0800">Toxin</keyword>
<keyword id="KW-0738">Voltage-gated sodium channel impairing toxin</keyword>
<sequence>MKILIFIIASFMLIGVECKEGYPMGRDGCKISCVINNNFCKVECQAKWRQSDGYCYFWGLSCYCTNLPEDAQVWDSSTNKCGG</sequence>
<dbReference type="EMBL" id="HM233951">
    <property type="protein sequence ID" value="ADV16829.1"/>
    <property type="molecule type" value="mRNA"/>
</dbReference>
<dbReference type="SMR" id="E7CLP2"/>
<dbReference type="GO" id="GO:0005576">
    <property type="term" value="C:extracellular region"/>
    <property type="evidence" value="ECO:0000314"/>
    <property type="project" value="UniProtKB"/>
</dbReference>
<dbReference type="GO" id="GO:0015459">
    <property type="term" value="F:potassium channel regulator activity"/>
    <property type="evidence" value="ECO:0000314"/>
    <property type="project" value="UniProtKB"/>
</dbReference>
<dbReference type="GO" id="GO:0019871">
    <property type="term" value="F:sodium channel inhibitor activity"/>
    <property type="evidence" value="ECO:0007669"/>
    <property type="project" value="InterPro"/>
</dbReference>
<dbReference type="GO" id="GO:0017080">
    <property type="term" value="F:sodium channel regulator activity"/>
    <property type="evidence" value="ECO:0000314"/>
    <property type="project" value="UniProtKB"/>
</dbReference>
<dbReference type="GO" id="GO:0090729">
    <property type="term" value="F:toxin activity"/>
    <property type="evidence" value="ECO:0000314"/>
    <property type="project" value="UniProtKB"/>
</dbReference>
<dbReference type="GO" id="GO:0006952">
    <property type="term" value="P:defense response"/>
    <property type="evidence" value="ECO:0007669"/>
    <property type="project" value="InterPro"/>
</dbReference>
<dbReference type="GO" id="GO:0044559">
    <property type="term" value="P:envenomation resulting in modulation of voltage-gated potassium channel activity in another organism"/>
    <property type="evidence" value="ECO:0000314"/>
    <property type="project" value="UniProtKB"/>
</dbReference>
<dbReference type="GO" id="GO:0044492">
    <property type="term" value="P:envenomation resulting in modulation of voltage-gated sodium channel activity in another organism"/>
    <property type="evidence" value="ECO:0000314"/>
    <property type="project" value="UniProtKB"/>
</dbReference>
<dbReference type="CDD" id="cd23106">
    <property type="entry name" value="neurotoxins_LC_scorpion"/>
    <property type="match status" value="1"/>
</dbReference>
<dbReference type="FunFam" id="3.30.30.10:FF:000002">
    <property type="entry name" value="Alpha-like toxin BmK-M1"/>
    <property type="match status" value="1"/>
</dbReference>
<dbReference type="Gene3D" id="3.30.30.10">
    <property type="entry name" value="Knottin, scorpion toxin-like"/>
    <property type="match status" value="1"/>
</dbReference>
<dbReference type="InterPro" id="IPR044062">
    <property type="entry name" value="LCN-type_CS_alpha_beta_dom"/>
</dbReference>
<dbReference type="InterPro" id="IPR003614">
    <property type="entry name" value="Scorpion_toxin-like"/>
</dbReference>
<dbReference type="InterPro" id="IPR036574">
    <property type="entry name" value="Scorpion_toxin-like_sf"/>
</dbReference>
<dbReference type="InterPro" id="IPR018218">
    <property type="entry name" value="Scorpion_toxinL"/>
</dbReference>
<dbReference type="InterPro" id="IPR002061">
    <property type="entry name" value="Scorpion_toxinL/defensin"/>
</dbReference>
<dbReference type="Pfam" id="PF00537">
    <property type="entry name" value="Toxin_3"/>
    <property type="match status" value="1"/>
</dbReference>
<dbReference type="PRINTS" id="PR00285">
    <property type="entry name" value="SCORPNTOXIN"/>
</dbReference>
<dbReference type="SMART" id="SM00505">
    <property type="entry name" value="Knot1"/>
    <property type="match status" value="1"/>
</dbReference>
<dbReference type="SUPFAM" id="SSF57095">
    <property type="entry name" value="Scorpion toxin-like"/>
    <property type="match status" value="1"/>
</dbReference>
<dbReference type="PROSITE" id="PS51863">
    <property type="entry name" value="LCN_CSAB"/>
    <property type="match status" value="1"/>
</dbReference>
<name>SX12F_RHOJU</name>
<reference evidence="6 7" key="1">
    <citation type="journal article" date="2011" name="Toxicon">
        <title>Biochemical and molecular characterization of the venom from the Cuban scorpion Rhopalurus junceus.</title>
        <authorList>
            <person name="Garcia-Gomez B.I."/>
            <person name="Coronas F.I."/>
            <person name="Restano-Cassulini R."/>
            <person name="Rodriguez R.R."/>
            <person name="Possani L.D."/>
        </authorList>
    </citation>
    <scope>NUCLEOTIDE SEQUENCE [MRNA]</scope>
    <scope>PROTEIN SEQUENCE OF 19-82</scope>
    <scope>FUNCTION</scope>
    <scope>SUBCELLULAR LOCATION</scope>
    <scope>TISSUE SPECIFICITY</scope>
    <scope>MASS SPECTROMETRY</scope>
    <source>
        <tissue evidence="5">Venom</tissue>
        <tissue evidence="7">Venom gland</tissue>
    </source>
</reference>
<comment type="function">
    <text evidence="4">Beta toxins bind voltage-independently at site-4 of sodium channels (Nav) and shift the voltage of activation toward more negative potentials thereby affecting sodium channel activation and promoting spontaneous and repetitive firing. This toxin is lethal to insects (A.domestica). It is not toxic to mice and does not affect mammal F11 sodium channels.</text>
</comment>
<comment type="subcellular location">
    <subcellularLocation>
        <location evidence="4">Secreted</location>
    </subcellularLocation>
</comment>
<comment type="tissue specificity">
    <text evidence="4">Expressed by the venom gland.</text>
</comment>
<comment type="domain">
    <text evidence="6">Has the structural arrangement of an alpha-helix connected to antiparallel beta-sheets by disulfide bonds (CS-alpha/beta).</text>
</comment>
<comment type="PTM">
    <text evidence="4">Contains 4 disulfide bonds.</text>
</comment>
<comment type="mass spectrometry"/>
<comment type="similarity">
    <text evidence="2">Belongs to the long (4 C-C) scorpion toxin superfamily. Sodium channel inhibitor family. Beta subfamily.</text>
</comment>
<accession>E7CLP2</accession>
<accession>P86685</accession>
<proteinExistence type="evidence at protein level"/>
<evidence type="ECO:0000250" key="1">
    <source>
        <dbReference type="UniProtKB" id="P15226"/>
    </source>
</evidence>
<evidence type="ECO:0000255" key="2"/>
<evidence type="ECO:0000255" key="3">
    <source>
        <dbReference type="PROSITE-ProRule" id="PRU01210"/>
    </source>
</evidence>
<evidence type="ECO:0000269" key="4">
    <source>
    </source>
</evidence>
<evidence type="ECO:0000303" key="5">
    <source>
    </source>
</evidence>
<evidence type="ECO:0000305" key="6"/>
<evidence type="ECO:0000312" key="7">
    <source>
        <dbReference type="EMBL" id="ADV16829.1"/>
    </source>
</evidence>
<feature type="signal peptide" evidence="4">
    <location>
        <begin position="1"/>
        <end position="18"/>
    </location>
</feature>
<feature type="peptide" id="PRO_0000413464" description="Putative beta-neurotoxin RjAa12f" evidence="4">
    <location>
        <begin position="19"/>
        <end position="82"/>
    </location>
</feature>
<feature type="propeptide" id="PRO_0000413465" evidence="4">
    <location>
        <position position="83"/>
    </location>
</feature>
<feature type="domain" description="LCN-type CS-alpha/beta" evidence="3">
    <location>
        <begin position="19"/>
        <end position="82"/>
    </location>
</feature>
<feature type="disulfide bond" evidence="3">
    <location>
        <begin position="29"/>
        <end position="81"/>
    </location>
</feature>
<feature type="disulfide bond" evidence="3">
    <location>
        <begin position="33"/>
        <end position="55"/>
    </location>
</feature>
<feature type="disulfide bond" evidence="3">
    <location>
        <begin position="40"/>
        <end position="62"/>
    </location>
</feature>
<feature type="disulfide bond" evidence="3">
    <location>
        <begin position="44"/>
        <end position="64"/>
    </location>
</feature>
<protein>
    <recommendedName>
        <fullName evidence="1">Putative beta-neurotoxin RjAa12f</fullName>
    </recommendedName>
</protein>